<gene>
    <name evidence="1" type="primary">nadK</name>
    <name type="ordered locus">SPA2542</name>
</gene>
<name>NADK_SALPA</name>
<keyword id="KW-0067">ATP-binding</keyword>
<keyword id="KW-0963">Cytoplasm</keyword>
<keyword id="KW-0418">Kinase</keyword>
<keyword id="KW-0520">NAD</keyword>
<keyword id="KW-0521">NADP</keyword>
<keyword id="KW-0547">Nucleotide-binding</keyword>
<keyword id="KW-0808">Transferase</keyword>
<organism>
    <name type="scientific">Salmonella paratyphi A (strain ATCC 9150 / SARB42)</name>
    <dbReference type="NCBI Taxonomy" id="295319"/>
    <lineage>
        <taxon>Bacteria</taxon>
        <taxon>Pseudomonadati</taxon>
        <taxon>Pseudomonadota</taxon>
        <taxon>Gammaproteobacteria</taxon>
        <taxon>Enterobacterales</taxon>
        <taxon>Enterobacteriaceae</taxon>
        <taxon>Salmonella</taxon>
    </lineage>
</organism>
<proteinExistence type="inferred from homology"/>
<sequence>MNNHFKCIGIVGHPRHPTALTTHEMLYRWLCDQGYEVIVEQQIAHELQLKNVPTGTLAEIGQQADLAVVVGGDGNMLGAARTLARYDINVIGINRGNLGFLTDLDPDNALQQLSDVLEGRYISEKRFLLEAQVCQQDRQKRISTAINEVVLHPGKVAHMIEFEVYIDETFAFSQRSDGLIISTPTGSTAYSLSAGGPILTPSLDAITLVPMFPHTLSARPLVINSSSTIRLRFSHRRSDLEISCDSQIALPIQEGEDVLIRRCDYHLNLIHPKDYSYFNTLSTKLGWSKKLF</sequence>
<reference key="1">
    <citation type="journal article" date="2004" name="Nat. Genet.">
        <title>Comparison of genome degradation in Paratyphi A and Typhi, human-restricted serovars of Salmonella enterica that cause typhoid.</title>
        <authorList>
            <person name="McClelland M."/>
            <person name="Sanderson K.E."/>
            <person name="Clifton S.W."/>
            <person name="Latreille P."/>
            <person name="Porwollik S."/>
            <person name="Sabo A."/>
            <person name="Meyer R."/>
            <person name="Bieri T."/>
            <person name="Ozersky P."/>
            <person name="McLellan M."/>
            <person name="Harkins C.R."/>
            <person name="Wang C."/>
            <person name="Nguyen C."/>
            <person name="Berghoff A."/>
            <person name="Elliott G."/>
            <person name="Kohlberg S."/>
            <person name="Strong C."/>
            <person name="Du F."/>
            <person name="Carter J."/>
            <person name="Kremizki C."/>
            <person name="Layman D."/>
            <person name="Leonard S."/>
            <person name="Sun H."/>
            <person name="Fulton L."/>
            <person name="Nash W."/>
            <person name="Miner T."/>
            <person name="Minx P."/>
            <person name="Delehaunty K."/>
            <person name="Fronick C."/>
            <person name="Magrini V."/>
            <person name="Nhan M."/>
            <person name="Warren W."/>
            <person name="Florea L."/>
            <person name="Spieth J."/>
            <person name="Wilson R.K."/>
        </authorList>
    </citation>
    <scope>NUCLEOTIDE SEQUENCE [LARGE SCALE GENOMIC DNA]</scope>
    <source>
        <strain>ATCC 9150 / SARB42</strain>
    </source>
</reference>
<comment type="function">
    <text evidence="1">Involved in the regulation of the intracellular balance of NAD and NADP, and is a key enzyme in the biosynthesis of NADP. Catalyzes specifically the phosphorylation on 2'-hydroxyl of the adenosine moiety of NAD to yield NADP.</text>
</comment>
<comment type="catalytic activity">
    <reaction evidence="1">
        <text>NAD(+) + ATP = ADP + NADP(+) + H(+)</text>
        <dbReference type="Rhea" id="RHEA:18629"/>
        <dbReference type="ChEBI" id="CHEBI:15378"/>
        <dbReference type="ChEBI" id="CHEBI:30616"/>
        <dbReference type="ChEBI" id="CHEBI:57540"/>
        <dbReference type="ChEBI" id="CHEBI:58349"/>
        <dbReference type="ChEBI" id="CHEBI:456216"/>
        <dbReference type="EC" id="2.7.1.23"/>
    </reaction>
</comment>
<comment type="cofactor">
    <cofactor evidence="1">
        <name>a divalent metal cation</name>
        <dbReference type="ChEBI" id="CHEBI:60240"/>
    </cofactor>
</comment>
<comment type="subcellular location">
    <subcellularLocation>
        <location evidence="1">Cytoplasm</location>
    </subcellularLocation>
</comment>
<comment type="similarity">
    <text evidence="1">Belongs to the NAD kinase family.</text>
</comment>
<protein>
    <recommendedName>
        <fullName evidence="1">NAD kinase</fullName>
        <ecNumber evidence="1">2.7.1.23</ecNumber>
    </recommendedName>
    <alternativeName>
        <fullName evidence="1">ATP-dependent NAD kinase</fullName>
    </alternativeName>
</protein>
<dbReference type="EC" id="2.7.1.23" evidence="1"/>
<dbReference type="EMBL" id="CP000026">
    <property type="protein sequence ID" value="AAV78411.1"/>
    <property type="molecule type" value="Genomic_DNA"/>
</dbReference>
<dbReference type="RefSeq" id="WP_001059155.1">
    <property type="nucleotide sequence ID" value="NC_006511.1"/>
</dbReference>
<dbReference type="SMR" id="Q5PFG7"/>
<dbReference type="KEGG" id="spt:SPA2542"/>
<dbReference type="HOGENOM" id="CLU_008831_0_1_6"/>
<dbReference type="Proteomes" id="UP000008185">
    <property type="component" value="Chromosome"/>
</dbReference>
<dbReference type="GO" id="GO:0005737">
    <property type="term" value="C:cytoplasm"/>
    <property type="evidence" value="ECO:0007669"/>
    <property type="project" value="UniProtKB-SubCell"/>
</dbReference>
<dbReference type="GO" id="GO:0005524">
    <property type="term" value="F:ATP binding"/>
    <property type="evidence" value="ECO:0007669"/>
    <property type="project" value="UniProtKB-KW"/>
</dbReference>
<dbReference type="GO" id="GO:0046872">
    <property type="term" value="F:metal ion binding"/>
    <property type="evidence" value="ECO:0007669"/>
    <property type="project" value="UniProtKB-UniRule"/>
</dbReference>
<dbReference type="GO" id="GO:0051287">
    <property type="term" value="F:NAD binding"/>
    <property type="evidence" value="ECO:0007669"/>
    <property type="project" value="UniProtKB-ARBA"/>
</dbReference>
<dbReference type="GO" id="GO:0003951">
    <property type="term" value="F:NAD+ kinase activity"/>
    <property type="evidence" value="ECO:0007669"/>
    <property type="project" value="UniProtKB-UniRule"/>
</dbReference>
<dbReference type="GO" id="GO:0019674">
    <property type="term" value="P:NAD metabolic process"/>
    <property type="evidence" value="ECO:0007669"/>
    <property type="project" value="InterPro"/>
</dbReference>
<dbReference type="GO" id="GO:0006741">
    <property type="term" value="P:NADP biosynthetic process"/>
    <property type="evidence" value="ECO:0007669"/>
    <property type="project" value="UniProtKB-UniRule"/>
</dbReference>
<dbReference type="FunFam" id="2.60.200.30:FF:000001">
    <property type="entry name" value="NAD kinase"/>
    <property type="match status" value="1"/>
</dbReference>
<dbReference type="FunFam" id="3.40.50.10330:FF:000004">
    <property type="entry name" value="NAD kinase"/>
    <property type="match status" value="1"/>
</dbReference>
<dbReference type="Gene3D" id="3.40.50.10330">
    <property type="entry name" value="Probable inorganic polyphosphate/atp-NAD kinase, domain 1"/>
    <property type="match status" value="1"/>
</dbReference>
<dbReference type="Gene3D" id="2.60.200.30">
    <property type="entry name" value="Probable inorganic polyphosphate/atp-NAD kinase, domain 2"/>
    <property type="match status" value="1"/>
</dbReference>
<dbReference type="HAMAP" id="MF_00361">
    <property type="entry name" value="NAD_kinase"/>
    <property type="match status" value="1"/>
</dbReference>
<dbReference type="InterPro" id="IPR017438">
    <property type="entry name" value="ATP-NAD_kinase_N"/>
</dbReference>
<dbReference type="InterPro" id="IPR017437">
    <property type="entry name" value="ATP-NAD_kinase_PpnK-typ_C"/>
</dbReference>
<dbReference type="InterPro" id="IPR016064">
    <property type="entry name" value="NAD/diacylglycerol_kinase_sf"/>
</dbReference>
<dbReference type="InterPro" id="IPR002504">
    <property type="entry name" value="NADK"/>
</dbReference>
<dbReference type="NCBIfam" id="NF002306">
    <property type="entry name" value="PRK01231.1"/>
    <property type="match status" value="1"/>
</dbReference>
<dbReference type="NCBIfam" id="NF002893">
    <property type="entry name" value="PRK03378.1"/>
    <property type="match status" value="1"/>
</dbReference>
<dbReference type="PANTHER" id="PTHR20275">
    <property type="entry name" value="NAD KINASE"/>
    <property type="match status" value="1"/>
</dbReference>
<dbReference type="PANTHER" id="PTHR20275:SF0">
    <property type="entry name" value="NAD KINASE"/>
    <property type="match status" value="1"/>
</dbReference>
<dbReference type="Pfam" id="PF01513">
    <property type="entry name" value="NAD_kinase"/>
    <property type="match status" value="1"/>
</dbReference>
<dbReference type="Pfam" id="PF20143">
    <property type="entry name" value="NAD_kinase_C"/>
    <property type="match status" value="1"/>
</dbReference>
<dbReference type="SUPFAM" id="SSF111331">
    <property type="entry name" value="NAD kinase/diacylglycerol kinase-like"/>
    <property type="match status" value="1"/>
</dbReference>
<accession>Q5PFG7</accession>
<feature type="chain" id="PRO_0000229686" description="NAD kinase">
    <location>
        <begin position="1"/>
        <end position="292"/>
    </location>
</feature>
<feature type="active site" description="Proton acceptor" evidence="1">
    <location>
        <position position="73"/>
    </location>
</feature>
<feature type="binding site" evidence="1">
    <location>
        <begin position="73"/>
        <end position="74"/>
    </location>
    <ligand>
        <name>NAD(+)</name>
        <dbReference type="ChEBI" id="CHEBI:57540"/>
    </ligand>
</feature>
<feature type="binding site" evidence="1">
    <location>
        <begin position="147"/>
        <end position="148"/>
    </location>
    <ligand>
        <name>NAD(+)</name>
        <dbReference type="ChEBI" id="CHEBI:57540"/>
    </ligand>
</feature>
<feature type="binding site" evidence="1">
    <location>
        <position position="158"/>
    </location>
    <ligand>
        <name>NAD(+)</name>
        <dbReference type="ChEBI" id="CHEBI:57540"/>
    </ligand>
</feature>
<feature type="binding site" evidence="1">
    <location>
        <position position="175"/>
    </location>
    <ligand>
        <name>NAD(+)</name>
        <dbReference type="ChEBI" id="CHEBI:57540"/>
    </ligand>
</feature>
<feature type="binding site" evidence="1">
    <location>
        <position position="177"/>
    </location>
    <ligand>
        <name>NAD(+)</name>
        <dbReference type="ChEBI" id="CHEBI:57540"/>
    </ligand>
</feature>
<feature type="binding site" evidence="1">
    <location>
        <begin position="188"/>
        <end position="193"/>
    </location>
    <ligand>
        <name>NAD(+)</name>
        <dbReference type="ChEBI" id="CHEBI:57540"/>
    </ligand>
</feature>
<feature type="binding site" evidence="1">
    <location>
        <position position="247"/>
    </location>
    <ligand>
        <name>NAD(+)</name>
        <dbReference type="ChEBI" id="CHEBI:57540"/>
    </ligand>
</feature>
<evidence type="ECO:0000255" key="1">
    <source>
        <dbReference type="HAMAP-Rule" id="MF_00361"/>
    </source>
</evidence>